<proteinExistence type="inferred from homology"/>
<organism>
    <name type="scientific">Staphylococcus aureus (strain JH1)</name>
    <dbReference type="NCBI Taxonomy" id="359787"/>
    <lineage>
        <taxon>Bacteria</taxon>
        <taxon>Bacillati</taxon>
        <taxon>Bacillota</taxon>
        <taxon>Bacilli</taxon>
        <taxon>Bacillales</taxon>
        <taxon>Staphylococcaceae</taxon>
        <taxon>Staphylococcus</taxon>
    </lineage>
</organism>
<keyword id="KW-0963">Cytoplasm</keyword>
<keyword id="KW-0648">Protein biosynthesis</keyword>
<evidence type="ECO:0000255" key="1">
    <source>
        <dbReference type="HAMAP-Rule" id="MF_00040"/>
    </source>
</evidence>
<evidence type="ECO:0000256" key="2">
    <source>
        <dbReference type="SAM" id="MobiDB-lite"/>
    </source>
</evidence>
<feature type="chain" id="PRO_1000074605" description="Ribosome-recycling factor">
    <location>
        <begin position="1"/>
        <end position="184"/>
    </location>
</feature>
<feature type="region of interest" description="Disordered" evidence="2">
    <location>
        <begin position="134"/>
        <end position="167"/>
    </location>
</feature>
<protein>
    <recommendedName>
        <fullName evidence="1">Ribosome-recycling factor</fullName>
        <shortName evidence="1">RRF</shortName>
    </recommendedName>
    <alternativeName>
        <fullName evidence="1">Ribosome-releasing factor</fullName>
    </alternativeName>
</protein>
<dbReference type="EMBL" id="CP000736">
    <property type="protein sequence ID" value="ABR52196.1"/>
    <property type="molecule type" value="Genomic_DNA"/>
</dbReference>
<dbReference type="SMR" id="A6U178"/>
<dbReference type="KEGG" id="sah:SaurJH1_1345"/>
<dbReference type="HOGENOM" id="CLU_073981_2_0_9"/>
<dbReference type="GO" id="GO:0005737">
    <property type="term" value="C:cytoplasm"/>
    <property type="evidence" value="ECO:0007669"/>
    <property type="project" value="UniProtKB-SubCell"/>
</dbReference>
<dbReference type="GO" id="GO:0043023">
    <property type="term" value="F:ribosomal large subunit binding"/>
    <property type="evidence" value="ECO:0007669"/>
    <property type="project" value="TreeGrafter"/>
</dbReference>
<dbReference type="GO" id="GO:0006415">
    <property type="term" value="P:translational termination"/>
    <property type="evidence" value="ECO:0007669"/>
    <property type="project" value="UniProtKB-UniRule"/>
</dbReference>
<dbReference type="CDD" id="cd00520">
    <property type="entry name" value="RRF"/>
    <property type="match status" value="1"/>
</dbReference>
<dbReference type="FunFam" id="1.10.132.20:FF:000001">
    <property type="entry name" value="Ribosome-recycling factor"/>
    <property type="match status" value="1"/>
</dbReference>
<dbReference type="FunFam" id="3.30.1360.40:FF:000001">
    <property type="entry name" value="Ribosome-recycling factor"/>
    <property type="match status" value="1"/>
</dbReference>
<dbReference type="Gene3D" id="3.30.1360.40">
    <property type="match status" value="1"/>
</dbReference>
<dbReference type="Gene3D" id="1.10.132.20">
    <property type="entry name" value="Ribosome-recycling factor"/>
    <property type="match status" value="1"/>
</dbReference>
<dbReference type="HAMAP" id="MF_00040">
    <property type="entry name" value="RRF"/>
    <property type="match status" value="1"/>
</dbReference>
<dbReference type="InterPro" id="IPR002661">
    <property type="entry name" value="Ribosome_recyc_fac"/>
</dbReference>
<dbReference type="InterPro" id="IPR023584">
    <property type="entry name" value="Ribosome_recyc_fac_dom"/>
</dbReference>
<dbReference type="InterPro" id="IPR036191">
    <property type="entry name" value="RRF_sf"/>
</dbReference>
<dbReference type="NCBIfam" id="TIGR00496">
    <property type="entry name" value="frr"/>
    <property type="match status" value="1"/>
</dbReference>
<dbReference type="PANTHER" id="PTHR20982:SF3">
    <property type="entry name" value="MITOCHONDRIAL RIBOSOME RECYCLING FACTOR PSEUDO 1"/>
    <property type="match status" value="1"/>
</dbReference>
<dbReference type="PANTHER" id="PTHR20982">
    <property type="entry name" value="RIBOSOME RECYCLING FACTOR"/>
    <property type="match status" value="1"/>
</dbReference>
<dbReference type="Pfam" id="PF01765">
    <property type="entry name" value="RRF"/>
    <property type="match status" value="1"/>
</dbReference>
<dbReference type="SUPFAM" id="SSF55194">
    <property type="entry name" value="Ribosome recycling factor, RRF"/>
    <property type="match status" value="1"/>
</dbReference>
<comment type="function">
    <text evidence="1">Responsible for the release of ribosomes from messenger RNA at the termination of protein biosynthesis. May increase the efficiency of translation by recycling ribosomes from one round of translation to another.</text>
</comment>
<comment type="subcellular location">
    <subcellularLocation>
        <location evidence="1">Cytoplasm</location>
    </subcellularLocation>
</comment>
<comment type="similarity">
    <text evidence="1">Belongs to the RRF family.</text>
</comment>
<sequence length="184" mass="20353">MSDIINETKSRMQKSIESLSRELANISAGRANSNLLNGVTVDYYGAPTPVQQLASINVPEARLLVISPYDKTSVADIEKAIIAANLGVNPTSDGEVIRIAVPALTEERRKERVKDVKKIGEEAKVSVRNIRRDMNDQLKKDEKNGDITEDELRSGTEDVQKATDNSIKEIDQMIADKEKDIMSV</sequence>
<gene>
    <name evidence="1" type="primary">frr</name>
    <name type="ordered locus">SaurJH1_1345</name>
</gene>
<accession>A6U178</accession>
<name>RRF_STAA2</name>
<reference key="1">
    <citation type="submission" date="2007-06" db="EMBL/GenBank/DDBJ databases">
        <title>Complete sequence of chromosome of Staphylococcus aureus subsp. aureus JH1.</title>
        <authorList>
            <consortium name="US DOE Joint Genome Institute"/>
            <person name="Copeland A."/>
            <person name="Lucas S."/>
            <person name="Lapidus A."/>
            <person name="Barry K."/>
            <person name="Detter J.C."/>
            <person name="Glavina del Rio T."/>
            <person name="Hammon N."/>
            <person name="Israni S."/>
            <person name="Dalin E."/>
            <person name="Tice H."/>
            <person name="Pitluck S."/>
            <person name="Chain P."/>
            <person name="Malfatti S."/>
            <person name="Shin M."/>
            <person name="Vergez L."/>
            <person name="Schmutz J."/>
            <person name="Larimer F."/>
            <person name="Land M."/>
            <person name="Hauser L."/>
            <person name="Kyrpides N."/>
            <person name="Ivanova N."/>
            <person name="Tomasz A."/>
            <person name="Richardson P."/>
        </authorList>
    </citation>
    <scope>NUCLEOTIDE SEQUENCE [LARGE SCALE GENOMIC DNA]</scope>
    <source>
        <strain>JH1</strain>
    </source>
</reference>